<gene>
    <name type="primary">ymfL</name>
    <name type="ordered locus">b1147</name>
    <name type="ordered locus">JW1133</name>
</gene>
<protein>
    <recommendedName>
        <fullName>Uncharacterized protein YmfL</fullName>
    </recommendedName>
</protein>
<organism>
    <name type="scientific">Escherichia coli (strain K12)</name>
    <dbReference type="NCBI Taxonomy" id="83333"/>
    <lineage>
        <taxon>Bacteria</taxon>
        <taxon>Pseudomonadati</taxon>
        <taxon>Pseudomonadota</taxon>
        <taxon>Gammaproteobacteria</taxon>
        <taxon>Enterobacterales</taxon>
        <taxon>Enterobacteriaceae</taxon>
        <taxon>Escherichia</taxon>
    </lineage>
</organism>
<keyword id="KW-1185">Reference proteome</keyword>
<reference key="1">
    <citation type="journal article" date="1996" name="DNA Res.">
        <title>A 718-kb DNA sequence of the Escherichia coli K-12 genome corresponding to the 12.7-28.0 min region on the linkage map.</title>
        <authorList>
            <person name="Oshima T."/>
            <person name="Aiba H."/>
            <person name="Baba T."/>
            <person name="Fujita K."/>
            <person name="Hayashi K."/>
            <person name="Honjo A."/>
            <person name="Ikemoto K."/>
            <person name="Inada T."/>
            <person name="Itoh T."/>
            <person name="Kajihara M."/>
            <person name="Kanai K."/>
            <person name="Kashimoto K."/>
            <person name="Kimura S."/>
            <person name="Kitagawa M."/>
            <person name="Makino K."/>
            <person name="Masuda S."/>
            <person name="Miki T."/>
            <person name="Mizobuchi K."/>
            <person name="Mori H."/>
            <person name="Motomura K."/>
            <person name="Nakamura Y."/>
            <person name="Nashimoto H."/>
            <person name="Nishio Y."/>
            <person name="Saito N."/>
            <person name="Sampei G."/>
            <person name="Seki Y."/>
            <person name="Tagami H."/>
            <person name="Takemoto K."/>
            <person name="Wada C."/>
            <person name="Yamamoto Y."/>
            <person name="Yano M."/>
            <person name="Horiuchi T."/>
        </authorList>
    </citation>
    <scope>NUCLEOTIDE SEQUENCE [LARGE SCALE GENOMIC DNA]</scope>
    <source>
        <strain>K12 / W3110 / ATCC 27325 / DSM 5911</strain>
    </source>
</reference>
<reference key="2">
    <citation type="journal article" date="1997" name="Science">
        <title>The complete genome sequence of Escherichia coli K-12.</title>
        <authorList>
            <person name="Blattner F.R."/>
            <person name="Plunkett G. III"/>
            <person name="Bloch C.A."/>
            <person name="Perna N.T."/>
            <person name="Burland V."/>
            <person name="Riley M."/>
            <person name="Collado-Vides J."/>
            <person name="Glasner J.D."/>
            <person name="Rode C.K."/>
            <person name="Mayhew G.F."/>
            <person name="Gregor J."/>
            <person name="Davis N.W."/>
            <person name="Kirkpatrick H.A."/>
            <person name="Goeden M.A."/>
            <person name="Rose D.J."/>
            <person name="Mau B."/>
            <person name="Shao Y."/>
        </authorList>
    </citation>
    <scope>NUCLEOTIDE SEQUENCE [LARGE SCALE GENOMIC DNA]</scope>
    <source>
        <strain>K12 / MG1655 / ATCC 47076</strain>
    </source>
</reference>
<reference key="3">
    <citation type="journal article" date="2006" name="Mol. Syst. Biol.">
        <title>Highly accurate genome sequences of Escherichia coli K-12 strains MG1655 and W3110.</title>
        <authorList>
            <person name="Hayashi K."/>
            <person name="Morooka N."/>
            <person name="Yamamoto Y."/>
            <person name="Fujita K."/>
            <person name="Isono K."/>
            <person name="Choi S."/>
            <person name="Ohtsubo E."/>
            <person name="Baba T."/>
            <person name="Wanner B.L."/>
            <person name="Mori H."/>
            <person name="Horiuchi T."/>
        </authorList>
    </citation>
    <scope>NUCLEOTIDE SEQUENCE [LARGE SCALE GENOMIC DNA]</scope>
    <source>
        <strain>K12 / W3110 / ATCC 27325 / DSM 5911</strain>
    </source>
</reference>
<proteinExistence type="predicted"/>
<evidence type="ECO:0000305" key="1"/>
<sequence>MGKHHWKIEKQPEWYVKAVRKTIAALPSGYAEAADWLDVTENALFNRLRADGDQIFPLGWAMVLQRAGGTHFIADAVAQSANGVFVSLPDVEDVDNADINQRLLEVIEQIGSYSKQIRSAIEDGVVEPHEKTAINDELYLSISKLQEHAALVYKIFCISESNDARECAAPGVVASIASGCGETNA</sequence>
<accession>P75976</accession>
<name>YMFL_ECOLI</name>
<feature type="chain" id="PRO_0000168845" description="Uncharacterized protein YmfL">
    <location>
        <begin position="1"/>
        <end position="185"/>
    </location>
</feature>
<dbReference type="EMBL" id="U00096">
    <property type="protein sequence ID" value="AAC74231.2"/>
    <property type="molecule type" value="Genomic_DNA"/>
</dbReference>
<dbReference type="EMBL" id="AP009048">
    <property type="protein sequence ID" value="BAA35973.1"/>
    <property type="status" value="ALT_INIT"/>
    <property type="molecule type" value="Genomic_DNA"/>
</dbReference>
<dbReference type="PIR" id="H64859">
    <property type="entry name" value="H64859"/>
</dbReference>
<dbReference type="RefSeq" id="NP_415665.2">
    <property type="nucleotide sequence ID" value="NC_000913.3"/>
</dbReference>
<dbReference type="RefSeq" id="WP_000515837.1">
    <property type="nucleotide sequence ID" value="NZ_CP064683.1"/>
</dbReference>
<dbReference type="SMR" id="P75976"/>
<dbReference type="BioGRID" id="4262851">
    <property type="interactions" value="126"/>
</dbReference>
<dbReference type="FunCoup" id="P75976">
    <property type="interactions" value="6"/>
</dbReference>
<dbReference type="STRING" id="511145.b1147"/>
<dbReference type="PaxDb" id="511145-b1147"/>
<dbReference type="EnsemblBacteria" id="AAC74231">
    <property type="protein sequence ID" value="AAC74231"/>
    <property type="gene ID" value="b1147"/>
</dbReference>
<dbReference type="GeneID" id="945717"/>
<dbReference type="KEGG" id="ecj:JW1133"/>
<dbReference type="KEGG" id="eco:b1147"/>
<dbReference type="PATRIC" id="fig|511145.12.peg.1189"/>
<dbReference type="EchoBASE" id="EB3998"/>
<dbReference type="eggNOG" id="ENOG50304WU">
    <property type="taxonomic scope" value="Bacteria"/>
</dbReference>
<dbReference type="HOGENOM" id="CLU_104109_1_0_6"/>
<dbReference type="InParanoid" id="P75976"/>
<dbReference type="OMA" id="NRNHRTM"/>
<dbReference type="PhylomeDB" id="P75976"/>
<dbReference type="BioCyc" id="EcoCyc:G6591-MONOMER"/>
<dbReference type="PRO" id="PR:P75976"/>
<dbReference type="Proteomes" id="UP000000625">
    <property type="component" value="Chromosome"/>
</dbReference>
<dbReference type="GO" id="GO:0003677">
    <property type="term" value="F:DNA binding"/>
    <property type="evidence" value="ECO:0007669"/>
    <property type="project" value="InterPro"/>
</dbReference>
<dbReference type="InterPro" id="IPR009679">
    <property type="entry name" value="Phage_186_CII-like"/>
</dbReference>
<dbReference type="InterPro" id="IPR048188">
    <property type="entry name" value="YmfL-like"/>
</dbReference>
<dbReference type="NCBIfam" id="NF041471">
    <property type="entry name" value="phage_reg_YmfL"/>
    <property type="match status" value="1"/>
</dbReference>
<dbReference type="Pfam" id="PF06892">
    <property type="entry name" value="Phage_CP76"/>
    <property type="match status" value="1"/>
</dbReference>
<comment type="sequence caution" evidence="1">
    <conflict type="erroneous initiation">
        <sequence resource="EMBL-CDS" id="BAA35973"/>
    </conflict>
</comment>